<protein>
    <recommendedName>
        <fullName>Membrane protein insertion and folding monitor</fullName>
    </recommendedName>
    <alternativeName>
        <fullName>Sensor of SpoIIIJ activity</fullName>
    </alternativeName>
</protein>
<evidence type="ECO:0000255" key="1"/>
<evidence type="ECO:0000269" key="2">
    <source>
    </source>
</evidence>
<evidence type="ECO:0000269" key="3">
    <source>
    </source>
</evidence>
<evidence type="ECO:0000269" key="4">
    <source>
    </source>
</evidence>
<feature type="chain" id="PRO_0000049855" description="Membrane protein insertion and folding monitor">
    <location>
        <begin position="1"/>
        <end position="95"/>
    </location>
</feature>
<feature type="transmembrane region" description="Helical" evidence="1">
    <location>
        <begin position="12"/>
        <end position="32"/>
    </location>
</feature>
<feature type="region of interest" description="Crucial for elongation arrest">
    <location>
        <begin position="86"/>
        <end position="89"/>
    </location>
</feature>
<feature type="mutagenesis site" description="Increases accumulation of full-length MifM." evidence="2">
    <original>I</original>
    <variation>A</variation>
    <location>
        <position position="65"/>
    </location>
</feature>
<feature type="mutagenesis site" description="Reduces misCB/yqjG induction in misCA/spoIIIJ mutant." evidence="2">
    <original>Y</original>
    <variation>A</variation>
    <location>
        <position position="67"/>
    </location>
</feature>
<feature type="mutagenesis site" description="Increases accumulation of full-length MifM." evidence="2">
    <original>H</original>
    <variation>A</variation>
    <location>
        <position position="68"/>
    </location>
</feature>
<feature type="mutagenesis site" description="Increases accumulation of full-length MifM. Reduces misCB/yqjG induction in misCA/spoIIIJ mutant." evidence="2">
    <original>R</original>
    <variation>A</variation>
    <location>
        <position position="69"/>
    </location>
</feature>
<feature type="mutagenesis site" description="Increases accumulation of full-length MifM. Reduces misCB/yqjG induction in misCA/spoIIIJ mutant." evidence="2">
    <original>I</original>
    <variation>A</variation>
    <location>
        <position position="70"/>
    </location>
</feature>
<feature type="mutagenesis site" description="Reduces misCB/yqjG induction in misCA/spoIIIJ mutant." evidence="2">
    <original>T</original>
    <variation>A</variation>
    <location>
        <position position="71"/>
    </location>
</feature>
<feature type="mutagenesis site" description="Increases accumulation of full-length MifM. Reduces misCB/yqjG induction in misCA/spoIIIJ mutant." evidence="2">
    <original>W</original>
    <variation>A</variation>
    <location>
        <position position="73"/>
    </location>
</feature>
<feature type="mutagenesis site" description="Increases accumulation of full-length MifM. Reduces misCB/yqjG induction in misCA/spoIIIJ mutant." evidence="2">
    <original>I</original>
    <variation>A</variation>
    <location>
        <position position="74"/>
    </location>
</feature>
<feature type="mutagenesis site" description="Increases accumulation of full-length MifM. Reduces misCB/yqjG induction in misCA/spoIIIJ mutant." evidence="2">
    <original>M</original>
    <variation>A</variation>
    <location>
        <position position="80"/>
    </location>
</feature>
<feature type="mutagenesis site" description="Increases accumulation of full-length MifM. Reduces misCB/yqjG induction in misCA/spoIIIJ mutant." evidence="2">
    <original>N</original>
    <variation>A</variation>
    <location>
        <position position="81"/>
    </location>
</feature>
<feature type="mutagenesis site" description="Lack of activity." evidence="4">
    <original>DEED</original>
    <variation>AAAA</variation>
    <variation>KKKK</variation>
    <location>
        <begin position="86"/>
        <end position="89"/>
    </location>
</feature>
<feature type="mutagenesis site" description="No change in activity." evidence="4">
    <original>DEED</original>
    <variation>EDDE</variation>
    <variation>EEEE</variation>
    <location>
        <begin position="86"/>
        <end position="89"/>
    </location>
</feature>
<feature type="mutagenesis site" description="No change in activity.">
    <original>EE</original>
    <variation>DD</variation>
    <location>
        <begin position="87"/>
        <end position="88"/>
    </location>
</feature>
<feature type="mutagenesis site" description="Minor effects on translational arrest." evidence="2">
    <original>E</original>
    <variation>A</variation>
    <location>
        <position position="88"/>
    </location>
</feature>
<feature type="mutagenesis site" description="Minor effects on translational arrest." evidence="2">
    <original>D</original>
    <variation>A</variation>
    <location>
        <position position="89"/>
    </location>
</feature>
<comment type="function">
    <text evidence="2 3 4">Sensor protein that up-regulates translation of the secondary membrane protein insertase (MisCB/YqjG) when activity of the primary membrane protein insertase (MisCA/SpoIIIJ) is limited. Acts as a ribosome-nascent chain complex. When the primary membrane protein insertase activity or level is reduced, the membrane insertion of MifM is impaired, which induces arrest of MifM translation and unfolding of the mRNA hairpin. Unfolding leads to translation of the downstream gene, which encodes the secondary membrane protein insertase MisCB/YqjG. Translation arrest of MifM is mediated by interaction of its C-terminal domain with the ribosomal polypeptide exit tunnel. Undergoes multisite stalling, which may allow a sufficient duration of ribosomal stalling and consequently sufficient levels of MisCB/YqjG.</text>
</comment>
<comment type="subcellular location">
    <subcellularLocation>
        <location evidence="2">Cell membrane</location>
        <topology evidence="2">Single-pass membrane protein</topology>
    </subcellularLocation>
</comment>
<keyword id="KW-0002">3D-structure</keyword>
<keyword id="KW-1003">Cell membrane</keyword>
<keyword id="KW-0472">Membrane</keyword>
<keyword id="KW-1185">Reference proteome</keyword>
<keyword id="KW-0812">Transmembrane</keyword>
<keyword id="KW-1133">Transmembrane helix</keyword>
<reference key="1">
    <citation type="journal article" date="1997" name="Nature">
        <title>The complete genome sequence of the Gram-positive bacterium Bacillus subtilis.</title>
        <authorList>
            <person name="Kunst F."/>
            <person name="Ogasawara N."/>
            <person name="Moszer I."/>
            <person name="Albertini A.M."/>
            <person name="Alloni G."/>
            <person name="Azevedo V."/>
            <person name="Bertero M.G."/>
            <person name="Bessieres P."/>
            <person name="Bolotin A."/>
            <person name="Borchert S."/>
            <person name="Borriss R."/>
            <person name="Boursier L."/>
            <person name="Brans A."/>
            <person name="Braun M."/>
            <person name="Brignell S.C."/>
            <person name="Bron S."/>
            <person name="Brouillet S."/>
            <person name="Bruschi C.V."/>
            <person name="Caldwell B."/>
            <person name="Capuano V."/>
            <person name="Carter N.M."/>
            <person name="Choi S.-K."/>
            <person name="Codani J.-J."/>
            <person name="Connerton I.F."/>
            <person name="Cummings N.J."/>
            <person name="Daniel R.A."/>
            <person name="Denizot F."/>
            <person name="Devine K.M."/>
            <person name="Duesterhoeft A."/>
            <person name="Ehrlich S.D."/>
            <person name="Emmerson P.T."/>
            <person name="Entian K.-D."/>
            <person name="Errington J."/>
            <person name="Fabret C."/>
            <person name="Ferrari E."/>
            <person name="Foulger D."/>
            <person name="Fritz C."/>
            <person name="Fujita M."/>
            <person name="Fujita Y."/>
            <person name="Fuma S."/>
            <person name="Galizzi A."/>
            <person name="Galleron N."/>
            <person name="Ghim S.-Y."/>
            <person name="Glaser P."/>
            <person name="Goffeau A."/>
            <person name="Golightly E.J."/>
            <person name="Grandi G."/>
            <person name="Guiseppi G."/>
            <person name="Guy B.J."/>
            <person name="Haga K."/>
            <person name="Haiech J."/>
            <person name="Harwood C.R."/>
            <person name="Henaut A."/>
            <person name="Hilbert H."/>
            <person name="Holsappel S."/>
            <person name="Hosono S."/>
            <person name="Hullo M.-F."/>
            <person name="Itaya M."/>
            <person name="Jones L.-M."/>
            <person name="Joris B."/>
            <person name="Karamata D."/>
            <person name="Kasahara Y."/>
            <person name="Klaerr-Blanchard M."/>
            <person name="Klein C."/>
            <person name="Kobayashi Y."/>
            <person name="Koetter P."/>
            <person name="Koningstein G."/>
            <person name="Krogh S."/>
            <person name="Kumano M."/>
            <person name="Kurita K."/>
            <person name="Lapidus A."/>
            <person name="Lardinois S."/>
            <person name="Lauber J."/>
            <person name="Lazarevic V."/>
            <person name="Lee S.-M."/>
            <person name="Levine A."/>
            <person name="Liu H."/>
            <person name="Masuda S."/>
            <person name="Mauel C."/>
            <person name="Medigue C."/>
            <person name="Medina N."/>
            <person name="Mellado R.P."/>
            <person name="Mizuno M."/>
            <person name="Moestl D."/>
            <person name="Nakai S."/>
            <person name="Noback M."/>
            <person name="Noone D."/>
            <person name="O'Reilly M."/>
            <person name="Ogawa K."/>
            <person name="Ogiwara A."/>
            <person name="Oudega B."/>
            <person name="Park S.-H."/>
            <person name="Parro V."/>
            <person name="Pohl T.M."/>
            <person name="Portetelle D."/>
            <person name="Porwollik S."/>
            <person name="Prescott A.M."/>
            <person name="Presecan E."/>
            <person name="Pujic P."/>
            <person name="Purnelle B."/>
            <person name="Rapoport G."/>
            <person name="Rey M."/>
            <person name="Reynolds S."/>
            <person name="Rieger M."/>
            <person name="Rivolta C."/>
            <person name="Rocha E."/>
            <person name="Roche B."/>
            <person name="Rose M."/>
            <person name="Sadaie Y."/>
            <person name="Sato T."/>
            <person name="Scanlan E."/>
            <person name="Schleich S."/>
            <person name="Schroeter R."/>
            <person name="Scoffone F."/>
            <person name="Sekiguchi J."/>
            <person name="Sekowska A."/>
            <person name="Seror S.J."/>
            <person name="Serror P."/>
            <person name="Shin B.-S."/>
            <person name="Soldo B."/>
            <person name="Sorokin A."/>
            <person name="Tacconi E."/>
            <person name="Takagi T."/>
            <person name="Takahashi H."/>
            <person name="Takemaru K."/>
            <person name="Takeuchi M."/>
            <person name="Tamakoshi A."/>
            <person name="Tanaka T."/>
            <person name="Terpstra P."/>
            <person name="Tognoni A."/>
            <person name="Tosato V."/>
            <person name="Uchiyama S."/>
            <person name="Vandenbol M."/>
            <person name="Vannier F."/>
            <person name="Vassarotti A."/>
            <person name="Viari A."/>
            <person name="Wambutt R."/>
            <person name="Wedler E."/>
            <person name="Wedler H."/>
            <person name="Weitzenegger T."/>
            <person name="Winters P."/>
            <person name="Wipat A."/>
            <person name="Yamamoto H."/>
            <person name="Yamane K."/>
            <person name="Yasumoto K."/>
            <person name="Yata K."/>
            <person name="Yoshida K."/>
            <person name="Yoshikawa H.-F."/>
            <person name="Zumstein E."/>
            <person name="Yoshikawa H."/>
            <person name="Danchin A."/>
        </authorList>
    </citation>
    <scope>NUCLEOTIDE SEQUENCE [LARGE SCALE GENOMIC DNA]</scope>
    <source>
        <strain>168</strain>
    </source>
</reference>
<reference key="2">
    <citation type="journal article" date="2009" name="EMBO J.">
        <title>A ribosome-nascent chain sensor of membrane protein biogenesis in Bacillus subtilis.</title>
        <authorList>
            <person name="Chiba S."/>
            <person name="Lamsa A."/>
            <person name="Pogliano K."/>
        </authorList>
    </citation>
    <scope>FUNCTION</scope>
    <scope>SUBCELLULAR LOCATION</scope>
    <scope>GENE NAME</scope>
    <scope>MUTAGENESIS OF ILE-65; TYR-67; HIS-68; ARG-69; ILE-70; THR-71; TRP-73; ILE-74; MET-80; ASN-81; GLU-88 AND ASP-89</scope>
    <source>
        <strain>168 / PY79</strain>
    </source>
</reference>
<reference key="3">
    <citation type="journal article" date="2011" name="Proc. Natl. Acad. Sci. U.S.A.">
        <title>Recruitment of a species-specific translational arrest module to monitor different cellular processes.</title>
        <authorList>
            <person name="Chiba S."/>
            <person name="Kanamori T."/>
            <person name="Ueda T."/>
            <person name="Akiyama Y."/>
            <person name="Pogliano K."/>
            <person name="Ito K."/>
        </authorList>
    </citation>
    <scope>FUNCTION</scope>
</reference>
<reference key="4">
    <citation type="journal article" date="2012" name="Mol. Cell">
        <title>Multisite ribosomal stalling: a unique mode of regulatory nascent chain action revealed for MifM.</title>
        <authorList>
            <person name="Chiba S."/>
            <person name="Ito K."/>
        </authorList>
    </citation>
    <scope>FUNCTION</scope>
    <scope>MUTAGENESIS OF 86-ASP--ASP-89</scope>
    <source>
        <strain>168 / PY79</strain>
    </source>
</reference>
<accession>Q7WY64</accession>
<name>MIFM_BACSU</name>
<gene>
    <name type="primary">mifM</name>
    <name type="synonym">yqzJ</name>
    <name type="ordered locus">BSU23880</name>
</gene>
<organism>
    <name type="scientific">Bacillus subtilis (strain 168)</name>
    <dbReference type="NCBI Taxonomy" id="224308"/>
    <lineage>
        <taxon>Bacteria</taxon>
        <taxon>Bacillati</taxon>
        <taxon>Bacillota</taxon>
        <taxon>Bacilli</taxon>
        <taxon>Bacillales</taxon>
        <taxon>Bacillaceae</taxon>
        <taxon>Bacillus</taxon>
    </lineage>
</organism>
<dbReference type="EMBL" id="AL009126">
    <property type="protein sequence ID" value="CAE01460.1"/>
    <property type="molecule type" value="Genomic_DNA"/>
</dbReference>
<dbReference type="RefSeq" id="WP_010886563.1">
    <property type="nucleotide sequence ID" value="NZ_OZ025638.1"/>
</dbReference>
<dbReference type="RefSeq" id="YP_054586.1">
    <property type="nucleotide sequence ID" value="NC_000964.3"/>
</dbReference>
<dbReference type="PDB" id="3J9W">
    <property type="method" value="EM"/>
    <property type="resolution" value="3.90 A"/>
    <property type="chains" value="AZ=1-95"/>
</dbReference>
<dbReference type="PDB" id="7QGU">
    <property type="method" value="EM"/>
    <property type="resolution" value="4.75 A"/>
    <property type="chains" value="2=1-95"/>
</dbReference>
<dbReference type="PDBsum" id="3J9W"/>
<dbReference type="PDBsum" id="7QGU"/>
<dbReference type="EMDB" id="EMD-6306"/>
<dbReference type="SMR" id="Q7WY64"/>
<dbReference type="FunCoup" id="Q7WY64">
    <property type="interactions" value="16"/>
</dbReference>
<dbReference type="STRING" id="224308.BSU23880"/>
<dbReference type="PaxDb" id="224308-BSU23880"/>
<dbReference type="EnsemblBacteria" id="CAE01460">
    <property type="protein sequence ID" value="CAE01460"/>
    <property type="gene ID" value="BSU_23880"/>
</dbReference>
<dbReference type="GeneID" id="2914225"/>
<dbReference type="KEGG" id="bsu:BSU23880"/>
<dbReference type="PATRIC" id="fig|224308.43.peg.2491"/>
<dbReference type="InParanoid" id="Q7WY64"/>
<dbReference type="OrthoDB" id="2895784at2"/>
<dbReference type="BioCyc" id="BSUB:BSU23880-MONOMER"/>
<dbReference type="Proteomes" id="UP000001570">
    <property type="component" value="Chromosome"/>
</dbReference>
<dbReference type="GO" id="GO:0005886">
    <property type="term" value="C:plasma membrane"/>
    <property type="evidence" value="ECO:0007669"/>
    <property type="project" value="UniProtKB-SubCell"/>
</dbReference>
<sequence length="95" mass="11144">MTMFVESINDVLFLVDFFTIILPALTAIGIAFLLRECRAGEQWKSKRTDEHQTVFHINRTDFLIIIYHRITTWIRKVFRMNSPVNDEEDAGSLLL</sequence>
<proteinExistence type="evidence at protein level"/>